<gene>
    <name evidence="1" type="primary">apt</name>
    <name type="ordered locus">lp_2086</name>
</gene>
<reference key="1">
    <citation type="journal article" date="2003" name="Proc. Natl. Acad. Sci. U.S.A.">
        <title>Complete genome sequence of Lactobacillus plantarum WCFS1.</title>
        <authorList>
            <person name="Kleerebezem M."/>
            <person name="Boekhorst J."/>
            <person name="van Kranenburg R."/>
            <person name="Molenaar D."/>
            <person name="Kuipers O.P."/>
            <person name="Leer R."/>
            <person name="Tarchini R."/>
            <person name="Peters S.A."/>
            <person name="Sandbrink H.M."/>
            <person name="Fiers M.W.E.J."/>
            <person name="Stiekema W."/>
            <person name="Klein Lankhorst R.M."/>
            <person name="Bron P.A."/>
            <person name="Hoffer S.M."/>
            <person name="Nierop Groot M.N."/>
            <person name="Kerkhoven R."/>
            <person name="De Vries M."/>
            <person name="Ursing B."/>
            <person name="De Vos W.M."/>
            <person name="Siezen R.J."/>
        </authorList>
    </citation>
    <scope>NUCLEOTIDE SEQUENCE [LARGE SCALE GENOMIC DNA]</scope>
    <source>
        <strain>ATCC BAA-793 / NCIMB 8826 / WCFS1</strain>
    </source>
</reference>
<reference key="2">
    <citation type="journal article" date="2012" name="J. Bacteriol.">
        <title>Complete resequencing and reannotation of the Lactobacillus plantarum WCFS1 genome.</title>
        <authorList>
            <person name="Siezen R.J."/>
            <person name="Francke C."/>
            <person name="Renckens B."/>
            <person name="Boekhorst J."/>
            <person name="Wels M."/>
            <person name="Kleerebezem M."/>
            <person name="van Hijum S.A."/>
        </authorList>
    </citation>
    <scope>NUCLEOTIDE SEQUENCE [LARGE SCALE GENOMIC DNA]</scope>
    <scope>GENOME REANNOTATION</scope>
    <source>
        <strain>ATCC BAA-793 / NCIMB 8826 / WCFS1</strain>
    </source>
</reference>
<comment type="function">
    <text evidence="1">Catalyzes a salvage reaction resulting in the formation of AMP, that is energically less costly than de novo synthesis.</text>
</comment>
<comment type="catalytic activity">
    <reaction evidence="1">
        <text>AMP + diphosphate = 5-phospho-alpha-D-ribose 1-diphosphate + adenine</text>
        <dbReference type="Rhea" id="RHEA:16609"/>
        <dbReference type="ChEBI" id="CHEBI:16708"/>
        <dbReference type="ChEBI" id="CHEBI:33019"/>
        <dbReference type="ChEBI" id="CHEBI:58017"/>
        <dbReference type="ChEBI" id="CHEBI:456215"/>
        <dbReference type="EC" id="2.4.2.7"/>
    </reaction>
</comment>
<comment type="pathway">
    <text evidence="1">Purine metabolism; AMP biosynthesis via salvage pathway; AMP from adenine: step 1/1.</text>
</comment>
<comment type="subunit">
    <text evidence="1">Homodimer.</text>
</comment>
<comment type="subcellular location">
    <subcellularLocation>
        <location evidence="1">Cytoplasm</location>
    </subcellularLocation>
</comment>
<comment type="similarity">
    <text evidence="1">Belongs to the purine/pyrimidine phosphoribosyltransferase family.</text>
</comment>
<dbReference type="EC" id="2.4.2.7" evidence="1"/>
<dbReference type="EMBL" id="AL935263">
    <property type="protein sequence ID" value="CCC79324.1"/>
    <property type="molecule type" value="Genomic_DNA"/>
</dbReference>
<dbReference type="RefSeq" id="WP_003640768.1">
    <property type="nucleotide sequence ID" value="NC_004567.2"/>
</dbReference>
<dbReference type="RefSeq" id="YP_004889838.1">
    <property type="nucleotide sequence ID" value="NC_004567.2"/>
</dbReference>
<dbReference type="SMR" id="Q88VH0"/>
<dbReference type="STRING" id="220668.lp_2086"/>
<dbReference type="EnsemblBacteria" id="CCC79324">
    <property type="protein sequence ID" value="CCC79324"/>
    <property type="gene ID" value="lp_2086"/>
</dbReference>
<dbReference type="KEGG" id="lpl:lp_2086"/>
<dbReference type="PATRIC" id="fig|220668.9.peg.1765"/>
<dbReference type="eggNOG" id="COG0503">
    <property type="taxonomic scope" value="Bacteria"/>
</dbReference>
<dbReference type="HOGENOM" id="CLU_063339_3_0_9"/>
<dbReference type="OrthoDB" id="9803963at2"/>
<dbReference type="PhylomeDB" id="Q88VH0"/>
<dbReference type="UniPathway" id="UPA00588">
    <property type="reaction ID" value="UER00646"/>
</dbReference>
<dbReference type="Proteomes" id="UP000000432">
    <property type="component" value="Chromosome"/>
</dbReference>
<dbReference type="GO" id="GO:0005737">
    <property type="term" value="C:cytoplasm"/>
    <property type="evidence" value="ECO:0007669"/>
    <property type="project" value="UniProtKB-SubCell"/>
</dbReference>
<dbReference type="GO" id="GO:0002055">
    <property type="term" value="F:adenine binding"/>
    <property type="evidence" value="ECO:0007669"/>
    <property type="project" value="TreeGrafter"/>
</dbReference>
<dbReference type="GO" id="GO:0003999">
    <property type="term" value="F:adenine phosphoribosyltransferase activity"/>
    <property type="evidence" value="ECO:0007669"/>
    <property type="project" value="UniProtKB-UniRule"/>
</dbReference>
<dbReference type="GO" id="GO:0016208">
    <property type="term" value="F:AMP binding"/>
    <property type="evidence" value="ECO:0007669"/>
    <property type="project" value="TreeGrafter"/>
</dbReference>
<dbReference type="GO" id="GO:0006168">
    <property type="term" value="P:adenine salvage"/>
    <property type="evidence" value="ECO:0007669"/>
    <property type="project" value="InterPro"/>
</dbReference>
<dbReference type="GO" id="GO:0044209">
    <property type="term" value="P:AMP salvage"/>
    <property type="evidence" value="ECO:0007669"/>
    <property type="project" value="UniProtKB-UniRule"/>
</dbReference>
<dbReference type="GO" id="GO:0006166">
    <property type="term" value="P:purine ribonucleoside salvage"/>
    <property type="evidence" value="ECO:0007669"/>
    <property type="project" value="UniProtKB-KW"/>
</dbReference>
<dbReference type="CDD" id="cd06223">
    <property type="entry name" value="PRTases_typeI"/>
    <property type="match status" value="1"/>
</dbReference>
<dbReference type="FunFam" id="3.40.50.2020:FF:000004">
    <property type="entry name" value="Adenine phosphoribosyltransferase"/>
    <property type="match status" value="1"/>
</dbReference>
<dbReference type="Gene3D" id="3.40.50.2020">
    <property type="match status" value="1"/>
</dbReference>
<dbReference type="HAMAP" id="MF_00004">
    <property type="entry name" value="Aden_phosphoribosyltr"/>
    <property type="match status" value="1"/>
</dbReference>
<dbReference type="InterPro" id="IPR005764">
    <property type="entry name" value="Ade_phspho_trans"/>
</dbReference>
<dbReference type="InterPro" id="IPR000836">
    <property type="entry name" value="PRibTrfase_dom"/>
</dbReference>
<dbReference type="InterPro" id="IPR029057">
    <property type="entry name" value="PRTase-like"/>
</dbReference>
<dbReference type="InterPro" id="IPR050054">
    <property type="entry name" value="UPRTase/APRTase"/>
</dbReference>
<dbReference type="NCBIfam" id="TIGR01090">
    <property type="entry name" value="apt"/>
    <property type="match status" value="1"/>
</dbReference>
<dbReference type="NCBIfam" id="NF002633">
    <property type="entry name" value="PRK02304.1-2"/>
    <property type="match status" value="1"/>
</dbReference>
<dbReference type="NCBIfam" id="NF002634">
    <property type="entry name" value="PRK02304.1-3"/>
    <property type="match status" value="1"/>
</dbReference>
<dbReference type="NCBIfam" id="NF002636">
    <property type="entry name" value="PRK02304.1-5"/>
    <property type="match status" value="1"/>
</dbReference>
<dbReference type="PANTHER" id="PTHR32315">
    <property type="entry name" value="ADENINE PHOSPHORIBOSYLTRANSFERASE"/>
    <property type="match status" value="1"/>
</dbReference>
<dbReference type="PANTHER" id="PTHR32315:SF3">
    <property type="entry name" value="ADENINE PHOSPHORIBOSYLTRANSFERASE"/>
    <property type="match status" value="1"/>
</dbReference>
<dbReference type="Pfam" id="PF00156">
    <property type="entry name" value="Pribosyltran"/>
    <property type="match status" value="1"/>
</dbReference>
<dbReference type="SUPFAM" id="SSF53271">
    <property type="entry name" value="PRTase-like"/>
    <property type="match status" value="1"/>
</dbReference>
<evidence type="ECO:0000255" key="1">
    <source>
        <dbReference type="HAMAP-Rule" id="MF_00004"/>
    </source>
</evidence>
<sequence>MALDLKKYVASIPDYPEPGIIFRDISPLMADGEAYREATDQIVQFARDKHVDMIVGPEARGFIVGCPVAYELGVGFAPARKKGKLPRETVKATYDLEYGQSALYLHKDAIKPGQNVLVTDDLLATGGTISATIQMVEELGGNVVGTAFLVELKELHGRDKIKDYDMLSLMQF</sequence>
<keyword id="KW-0963">Cytoplasm</keyword>
<keyword id="KW-0328">Glycosyltransferase</keyword>
<keyword id="KW-0660">Purine salvage</keyword>
<keyword id="KW-1185">Reference proteome</keyword>
<keyword id="KW-0808">Transferase</keyword>
<organism>
    <name type="scientific">Lactiplantibacillus plantarum (strain ATCC BAA-793 / NCIMB 8826 / WCFS1)</name>
    <name type="common">Lactobacillus plantarum</name>
    <dbReference type="NCBI Taxonomy" id="220668"/>
    <lineage>
        <taxon>Bacteria</taxon>
        <taxon>Bacillati</taxon>
        <taxon>Bacillota</taxon>
        <taxon>Bacilli</taxon>
        <taxon>Lactobacillales</taxon>
        <taxon>Lactobacillaceae</taxon>
        <taxon>Lactiplantibacillus</taxon>
    </lineage>
</organism>
<feature type="chain" id="PRO_0000149400" description="Adenine phosphoribosyltransferase">
    <location>
        <begin position="1"/>
        <end position="172"/>
    </location>
</feature>
<protein>
    <recommendedName>
        <fullName evidence="1">Adenine phosphoribosyltransferase</fullName>
        <shortName evidence="1">APRT</shortName>
        <ecNumber evidence="1">2.4.2.7</ecNumber>
    </recommendedName>
</protein>
<name>APT_LACPL</name>
<accession>Q88VH0</accession>
<accession>F9UQ35</accession>
<proteinExistence type="inferred from homology"/>